<proteinExistence type="evidence at protein level"/>
<evidence type="ECO:0000255" key="1">
    <source>
        <dbReference type="PROSITE-ProRule" id="PRU00404"/>
    </source>
</evidence>
<evidence type="ECO:0000269" key="2">
    <source>
    </source>
</evidence>
<evidence type="ECO:0000269" key="3">
    <source>
    </source>
</evidence>
<evidence type="ECO:0000303" key="4">
    <source>
    </source>
</evidence>
<evidence type="ECO:0000305" key="5"/>
<evidence type="ECO:0000305" key="6">
    <source>
    </source>
</evidence>
<gene>
    <name type="primary">AP5M1</name>
    <name type="synonym">C14orf108</name>
    <name type="synonym">MUDENG</name>
</gene>
<name>AP5M1_HUMAN</name>
<comment type="function">
    <text evidence="2 3">As part of AP-5, a probable fifth adaptor protein complex it may be involved in endosomal transport. According to PubMed:18395520, it may play a role in cell death.</text>
</comment>
<comment type="subunit">
    <text>Probably part of the adaptor protein complex 5 (AP-5) a tetramer composed of AP5B1, AP5M1, AP5S1 and AP5Z1.</text>
</comment>
<comment type="interaction">
    <interactant intactId="EBI-15949594">
        <id>Q9H0R1-1</id>
    </interactant>
    <interactant intactId="EBI-5917279">
        <id>Q2VPB7</id>
        <label>AP5B1</label>
    </interactant>
    <organismsDiffer>false</organismsDiffer>
    <experiments>2</experiments>
</comment>
<comment type="subcellular location">
    <subcellularLocation>
        <location evidence="3">Cytoplasm</location>
        <location evidence="3">Cytosol</location>
    </subcellularLocation>
    <subcellularLocation>
        <location evidence="6">Late endosome membrane</location>
        <topology evidence="6">Peripheral membrane protein</topology>
        <orientation evidence="6">Cytoplasmic side</orientation>
    </subcellularLocation>
    <subcellularLocation>
        <location evidence="6">Lysosome membrane</location>
        <topology evidence="6">Peripheral membrane protein</topology>
        <orientation evidence="6">Cytoplasmic side</orientation>
    </subcellularLocation>
    <text>May cycle on and off membranes.</text>
</comment>
<comment type="alternative products">
    <event type="alternative splicing"/>
    <isoform>
        <id>Q9H0R1-1</id>
        <name>1</name>
        <sequence type="displayed"/>
    </isoform>
    <isoform>
        <id>Q9H0R1-2</id>
        <name>2</name>
        <sequence type="described" ref="VSP_008407 VSP_008408"/>
    </isoform>
</comment>
<comment type="tissue specificity">
    <text evidence="2">Expressed in various tumor cell lines including Jurkat, Hep-G2 and HeLa.</text>
</comment>
<comment type="miscellaneous">
    <molecule>Isoform 2</molecule>
    <text evidence="5">May be due to an intron retention.</text>
</comment>
<comment type="similarity">
    <text evidence="5">Belongs to the adaptor complexes medium subunit family.</text>
</comment>
<comment type="sequence caution" evidence="5">
    <conflict type="erroneous initiation">
        <sequence resource="EMBL-CDS" id="BAD18791"/>
    </conflict>
    <text>Truncated N-terminus.</text>
</comment>
<comment type="sequence caution" evidence="5">
    <conflict type="frameshift">
        <sequence resource="EMBL-CDS" id="BAD18791"/>
    </conflict>
</comment>
<dbReference type="EMBL" id="AL136685">
    <property type="protein sequence ID" value="CAB66620.1"/>
    <property type="molecule type" value="mRNA"/>
</dbReference>
<dbReference type="EMBL" id="AK001675">
    <property type="protein sequence ID" value="BAA91828.1"/>
    <property type="molecule type" value="mRNA"/>
</dbReference>
<dbReference type="EMBL" id="AK172824">
    <property type="protein sequence ID" value="BAD18791.1"/>
    <property type="status" value="ALT_SEQ"/>
    <property type="molecule type" value="mRNA"/>
</dbReference>
<dbReference type="EMBL" id="BC013174">
    <property type="protein sequence ID" value="AAH13174.1"/>
    <property type="molecule type" value="mRNA"/>
</dbReference>
<dbReference type="EMBL" id="AF094583">
    <property type="protein sequence ID" value="AAC78130.1"/>
    <property type="molecule type" value="mRNA"/>
</dbReference>
<dbReference type="CCDS" id="CCDS9729.1">
    <molecule id="Q9H0R1-1"/>
</dbReference>
<dbReference type="RefSeq" id="NP_060699.3">
    <molecule id="Q9H0R1-1"/>
    <property type="nucleotide sequence ID" value="NM_018229.3"/>
</dbReference>
<dbReference type="BioGRID" id="120863">
    <property type="interactions" value="12"/>
</dbReference>
<dbReference type="ComplexPortal" id="CPX-5181">
    <property type="entry name" value="AP-5 Adaptor complex"/>
</dbReference>
<dbReference type="CORUM" id="Q9H0R1"/>
<dbReference type="DIP" id="DIP-60180N"/>
<dbReference type="FunCoup" id="Q9H0R1">
    <property type="interactions" value="2472"/>
</dbReference>
<dbReference type="IntAct" id="Q9H0R1">
    <property type="interactions" value="11"/>
</dbReference>
<dbReference type="STRING" id="9606.ENSP00000261558"/>
<dbReference type="iPTMnet" id="Q9H0R1"/>
<dbReference type="PhosphoSitePlus" id="Q9H0R1"/>
<dbReference type="BioMuta" id="AP5M1"/>
<dbReference type="DMDM" id="37537844"/>
<dbReference type="jPOST" id="Q9H0R1"/>
<dbReference type="MassIVE" id="Q9H0R1"/>
<dbReference type="PaxDb" id="9606-ENSP00000261558"/>
<dbReference type="PeptideAtlas" id="Q9H0R1"/>
<dbReference type="ProteomicsDB" id="80312">
    <molecule id="Q9H0R1-1"/>
</dbReference>
<dbReference type="ProteomicsDB" id="80313">
    <molecule id="Q9H0R1-2"/>
</dbReference>
<dbReference type="Pumba" id="Q9H0R1"/>
<dbReference type="Antibodypedia" id="68208">
    <property type="antibodies" value="57 antibodies from 16 providers"/>
</dbReference>
<dbReference type="DNASU" id="55745"/>
<dbReference type="Ensembl" id="ENST00000261558.8">
    <molecule id="Q9H0R1-1"/>
    <property type="protein sequence ID" value="ENSP00000261558.3"/>
    <property type="gene ID" value="ENSG00000053770.12"/>
</dbReference>
<dbReference type="GeneID" id="55745"/>
<dbReference type="KEGG" id="hsa:55745"/>
<dbReference type="MANE-Select" id="ENST00000261558.8">
    <property type="protein sequence ID" value="ENSP00000261558.3"/>
    <property type="RefSeq nucleotide sequence ID" value="NM_018229.4"/>
    <property type="RefSeq protein sequence ID" value="NP_060699.3"/>
</dbReference>
<dbReference type="UCSC" id="uc001xcv.4">
    <molecule id="Q9H0R1-1"/>
    <property type="organism name" value="human"/>
</dbReference>
<dbReference type="AGR" id="HGNC:20192"/>
<dbReference type="CTD" id="55745"/>
<dbReference type="DisGeNET" id="55745"/>
<dbReference type="GeneCards" id="AP5M1"/>
<dbReference type="HGNC" id="HGNC:20192">
    <property type="gene designation" value="AP5M1"/>
</dbReference>
<dbReference type="HPA" id="ENSG00000053770">
    <property type="expression patterns" value="Low tissue specificity"/>
</dbReference>
<dbReference type="MIM" id="614368">
    <property type="type" value="gene"/>
</dbReference>
<dbReference type="neXtProt" id="NX_Q9H0R1"/>
<dbReference type="OpenTargets" id="ENSG00000053770"/>
<dbReference type="PharmGKB" id="PA164723216"/>
<dbReference type="VEuPathDB" id="HostDB:ENSG00000053770"/>
<dbReference type="eggNOG" id="KOG0937">
    <property type="taxonomic scope" value="Eukaryota"/>
</dbReference>
<dbReference type="GeneTree" id="ENSGT00390000006191"/>
<dbReference type="InParanoid" id="Q9H0R1"/>
<dbReference type="OMA" id="KEHPTDY"/>
<dbReference type="OrthoDB" id="1877176at2759"/>
<dbReference type="PAN-GO" id="Q9H0R1">
    <property type="GO annotations" value="5 GO annotations based on evolutionary models"/>
</dbReference>
<dbReference type="PhylomeDB" id="Q9H0R1"/>
<dbReference type="TreeFam" id="TF331963"/>
<dbReference type="PathwayCommons" id="Q9H0R1"/>
<dbReference type="SignaLink" id="Q9H0R1"/>
<dbReference type="BioGRID-ORCS" id="55745">
    <property type="hits" value="1 hit in 1150 CRISPR screens"/>
</dbReference>
<dbReference type="ChiTaRS" id="AP5M1">
    <property type="organism name" value="human"/>
</dbReference>
<dbReference type="GenomeRNAi" id="55745"/>
<dbReference type="Pharos" id="Q9H0R1">
    <property type="development level" value="Tbio"/>
</dbReference>
<dbReference type="PRO" id="PR:Q9H0R1"/>
<dbReference type="Proteomes" id="UP000005640">
    <property type="component" value="Chromosome 14"/>
</dbReference>
<dbReference type="RNAct" id="Q9H0R1">
    <property type="molecule type" value="protein"/>
</dbReference>
<dbReference type="Bgee" id="ENSG00000053770">
    <property type="expression patterns" value="Expressed in jejunal mucosa and 203 other cell types or tissues"/>
</dbReference>
<dbReference type="ExpressionAtlas" id="Q9H0R1">
    <property type="expression patterns" value="baseline and differential"/>
</dbReference>
<dbReference type="GO" id="GO:0044599">
    <property type="term" value="C:AP-5 adaptor complex"/>
    <property type="evidence" value="ECO:0000303"/>
    <property type="project" value="ComplexPortal"/>
</dbReference>
<dbReference type="GO" id="GO:0030119">
    <property type="term" value="C:AP-type membrane coat adaptor complex"/>
    <property type="evidence" value="ECO:0000314"/>
    <property type="project" value="UniProtKB"/>
</dbReference>
<dbReference type="GO" id="GO:0005829">
    <property type="term" value="C:cytosol"/>
    <property type="evidence" value="ECO:0000314"/>
    <property type="project" value="UniProtKB"/>
</dbReference>
<dbReference type="GO" id="GO:0005770">
    <property type="term" value="C:late endosome"/>
    <property type="evidence" value="ECO:0000314"/>
    <property type="project" value="UniProtKB"/>
</dbReference>
<dbReference type="GO" id="GO:0031902">
    <property type="term" value="C:late endosome membrane"/>
    <property type="evidence" value="ECO:0007669"/>
    <property type="project" value="UniProtKB-SubCell"/>
</dbReference>
<dbReference type="GO" id="GO:0005765">
    <property type="term" value="C:lysosomal membrane"/>
    <property type="evidence" value="ECO:0007669"/>
    <property type="project" value="UniProtKB-SubCell"/>
</dbReference>
<dbReference type="GO" id="GO:0005764">
    <property type="term" value="C:lysosome"/>
    <property type="evidence" value="ECO:0000314"/>
    <property type="project" value="UniProtKB"/>
</dbReference>
<dbReference type="GO" id="GO:0016020">
    <property type="term" value="C:membrane"/>
    <property type="evidence" value="ECO:0000314"/>
    <property type="project" value="UniProtKB"/>
</dbReference>
<dbReference type="GO" id="GO:0016197">
    <property type="term" value="P:endosomal transport"/>
    <property type="evidence" value="ECO:0000315"/>
    <property type="project" value="UniProtKB"/>
</dbReference>
<dbReference type="GO" id="GO:0015031">
    <property type="term" value="P:protein transport"/>
    <property type="evidence" value="ECO:0007669"/>
    <property type="project" value="UniProtKB-KW"/>
</dbReference>
<dbReference type="GO" id="GO:0016192">
    <property type="term" value="P:vesicle-mediated transport"/>
    <property type="evidence" value="ECO:0000303"/>
    <property type="project" value="ComplexPortal"/>
</dbReference>
<dbReference type="CDD" id="cd09256">
    <property type="entry name" value="AP_MuD_MHD"/>
    <property type="match status" value="1"/>
</dbReference>
<dbReference type="FunFam" id="2.60.40.1170:FF:000013">
    <property type="entry name" value="AP-5 complex subunit mu-1 isoform X1"/>
    <property type="match status" value="1"/>
</dbReference>
<dbReference type="FunFam" id="2.60.40.1170:FF:000014">
    <property type="entry name" value="AP-5 complex subunit mu-1 isoform X1"/>
    <property type="match status" value="1"/>
</dbReference>
<dbReference type="Gene3D" id="2.60.40.1170">
    <property type="entry name" value="Mu homology domain, subdomain B"/>
    <property type="match status" value="2"/>
</dbReference>
<dbReference type="InterPro" id="IPR036168">
    <property type="entry name" value="AP2_Mu_C_sf"/>
</dbReference>
<dbReference type="InterPro" id="IPR039591">
    <property type="entry name" value="AP5M1"/>
</dbReference>
<dbReference type="InterPro" id="IPR028565">
    <property type="entry name" value="MHD"/>
</dbReference>
<dbReference type="PANTHER" id="PTHR16082">
    <property type="entry name" value="AP-5 COMPLEX SUBUNIT MU-1"/>
    <property type="match status" value="1"/>
</dbReference>
<dbReference type="PANTHER" id="PTHR16082:SF2">
    <property type="entry name" value="AP-5 COMPLEX SUBUNIT MU-1"/>
    <property type="match status" value="1"/>
</dbReference>
<dbReference type="Pfam" id="PF00928">
    <property type="entry name" value="Adap_comp_sub"/>
    <property type="match status" value="1"/>
</dbReference>
<dbReference type="SUPFAM" id="SSF49447">
    <property type="entry name" value="Second domain of Mu2 adaptin subunit (ap50) of ap2 adaptor"/>
    <property type="match status" value="1"/>
</dbReference>
<dbReference type="PROSITE" id="PS51072">
    <property type="entry name" value="MHD"/>
    <property type="match status" value="1"/>
</dbReference>
<protein>
    <recommendedName>
        <fullName>AP-5 complex subunit mu-1</fullName>
    </recommendedName>
    <alternativeName>
        <fullName>Adaptor-related protein complex 5 subunit mu-1</fullName>
        <shortName>Mu5</shortName>
    </alternativeName>
    <alternativeName>
        <fullName>Mu-2-related death-inducing protein</fullName>
        <shortName>MuD</shortName>
    </alternativeName>
    <alternativeName>
        <fullName>Putative HIV-1 infection-related protein</fullName>
    </alternativeName>
</protein>
<accession>Q9H0R1</accession>
<accession>O95354</accession>
<accession>Q6ZMD7</accession>
<accession>Q96DX3</accession>
<accession>Q9NVC5</accession>
<sequence>MAQRAVWLISHEPGTPLCGTVRFSRRYPTVEKRARVFNGASYVPVPEDGPFLKALLFELRLLDDDKDFVESRDSCSRINKTSIYGLLIGGEELWPVVAFLKNDMIYACVPLVEQTLSPRPPLISVSGVSQGFEFLFGIQDFLYSGQKNDSELNTKLSQLPDLLLQACPFGTLLDANLQNSLDNTNFASVTQPQKQPAWKTGTYKGKPQVSISITEKVKSMQYDKQGIADTWQVVGTVTCKCDLEGIMPNVTISLSLPTNGSPLQDILVHPCVTSLDSAILTSSSIDAMDDSAFSGPYKFPFTPPLESFNLCFYTSQVPVPPILGFYQMKEEEVQLRITINLKLHESVKNNFEFCEAHIPFYNRGPITHLEYKTSFGQLEVFREKSLLIWIIGQKFPKSMEISLSGTVTFGAKSHEKQPFDPICTGETAYLKLHFRILDYTLTGCYADQHSVQVFASGKPKISAHRKLISSDYYIWNSKAPAPVTYGSLLL</sequence>
<keyword id="KW-0025">Alternative splicing</keyword>
<keyword id="KW-0963">Cytoplasm</keyword>
<keyword id="KW-0967">Endosome</keyword>
<keyword id="KW-0458">Lysosome</keyword>
<keyword id="KW-0472">Membrane</keyword>
<keyword id="KW-0653">Protein transport</keyword>
<keyword id="KW-1267">Proteomics identification</keyword>
<keyword id="KW-1185">Reference proteome</keyword>
<keyword id="KW-0813">Transport</keyword>
<reference key="1">
    <citation type="journal article" date="2008" name="Biochem. Biophys. Res. Commun.">
        <title>A novel protein, MUDENG, induces cell death in cytotoxic T cells.</title>
        <authorList>
            <person name="Lee M.-R."/>
            <person name="Shin J.N."/>
            <person name="Moon A.R."/>
            <person name="Park S.-Y."/>
            <person name="Hong G."/>
            <person name="Lee M.-J."/>
            <person name="Yun C.-W."/>
            <person name="Seol D.-W."/>
            <person name="Piya S."/>
            <person name="Bae J."/>
            <person name="Oh J.-W."/>
            <person name="Kim T.-H."/>
        </authorList>
    </citation>
    <scope>NUCLEOTIDE SEQUENCE [MRNA] (ISOFORM 1)</scope>
    <scope>FUNCTION</scope>
    <scope>TISSUE SPECIFICITY</scope>
</reference>
<reference key="2">
    <citation type="journal article" date="2001" name="Genome Res.">
        <title>Towards a catalog of human genes and proteins: sequencing and analysis of 500 novel complete protein coding human cDNAs.</title>
        <authorList>
            <person name="Wiemann S."/>
            <person name="Weil B."/>
            <person name="Wellenreuther R."/>
            <person name="Gassenhuber J."/>
            <person name="Glassl S."/>
            <person name="Ansorge W."/>
            <person name="Boecher M."/>
            <person name="Bloecker H."/>
            <person name="Bauersachs S."/>
            <person name="Blum H."/>
            <person name="Lauber J."/>
            <person name="Duesterhoeft A."/>
            <person name="Beyer A."/>
            <person name="Koehrer K."/>
            <person name="Strack N."/>
            <person name="Mewes H.-W."/>
            <person name="Ottenwaelder B."/>
            <person name="Obermaier B."/>
            <person name="Tampe J."/>
            <person name="Heubner D."/>
            <person name="Wambutt R."/>
            <person name="Korn B."/>
            <person name="Klein M."/>
            <person name="Poustka A."/>
        </authorList>
    </citation>
    <scope>NUCLEOTIDE SEQUENCE [LARGE SCALE MRNA] (ISOFORM 1)</scope>
    <source>
        <tissue>Fetal brain</tissue>
    </source>
</reference>
<reference key="3">
    <citation type="journal article" date="2004" name="Nat. Genet.">
        <title>Complete sequencing and characterization of 21,243 full-length human cDNAs.</title>
        <authorList>
            <person name="Ota T."/>
            <person name="Suzuki Y."/>
            <person name="Nishikawa T."/>
            <person name="Otsuki T."/>
            <person name="Sugiyama T."/>
            <person name="Irie R."/>
            <person name="Wakamatsu A."/>
            <person name="Hayashi K."/>
            <person name="Sato H."/>
            <person name="Nagai K."/>
            <person name="Kimura K."/>
            <person name="Makita H."/>
            <person name="Sekine M."/>
            <person name="Obayashi M."/>
            <person name="Nishi T."/>
            <person name="Shibahara T."/>
            <person name="Tanaka T."/>
            <person name="Ishii S."/>
            <person name="Yamamoto J."/>
            <person name="Saito K."/>
            <person name="Kawai Y."/>
            <person name="Isono Y."/>
            <person name="Nakamura Y."/>
            <person name="Nagahari K."/>
            <person name="Murakami K."/>
            <person name="Yasuda T."/>
            <person name="Iwayanagi T."/>
            <person name="Wagatsuma M."/>
            <person name="Shiratori A."/>
            <person name="Sudo H."/>
            <person name="Hosoiri T."/>
            <person name="Kaku Y."/>
            <person name="Kodaira H."/>
            <person name="Kondo H."/>
            <person name="Sugawara M."/>
            <person name="Takahashi M."/>
            <person name="Kanda K."/>
            <person name="Yokoi T."/>
            <person name="Furuya T."/>
            <person name="Kikkawa E."/>
            <person name="Omura Y."/>
            <person name="Abe K."/>
            <person name="Kamihara K."/>
            <person name="Katsuta N."/>
            <person name="Sato K."/>
            <person name="Tanikawa M."/>
            <person name="Yamazaki M."/>
            <person name="Ninomiya K."/>
            <person name="Ishibashi T."/>
            <person name="Yamashita H."/>
            <person name="Murakawa K."/>
            <person name="Fujimori K."/>
            <person name="Tanai H."/>
            <person name="Kimata M."/>
            <person name="Watanabe M."/>
            <person name="Hiraoka S."/>
            <person name="Chiba Y."/>
            <person name="Ishida S."/>
            <person name="Ono Y."/>
            <person name="Takiguchi S."/>
            <person name="Watanabe S."/>
            <person name="Yosida M."/>
            <person name="Hotuta T."/>
            <person name="Kusano J."/>
            <person name="Kanehori K."/>
            <person name="Takahashi-Fujii A."/>
            <person name="Hara H."/>
            <person name="Tanase T.-O."/>
            <person name="Nomura Y."/>
            <person name="Togiya S."/>
            <person name="Komai F."/>
            <person name="Hara R."/>
            <person name="Takeuchi K."/>
            <person name="Arita M."/>
            <person name="Imose N."/>
            <person name="Musashino K."/>
            <person name="Yuuki H."/>
            <person name="Oshima A."/>
            <person name="Sasaki N."/>
            <person name="Aotsuka S."/>
            <person name="Yoshikawa Y."/>
            <person name="Matsunawa H."/>
            <person name="Ichihara T."/>
            <person name="Shiohata N."/>
            <person name="Sano S."/>
            <person name="Moriya S."/>
            <person name="Momiyama H."/>
            <person name="Satoh N."/>
            <person name="Takami S."/>
            <person name="Terashima Y."/>
            <person name="Suzuki O."/>
            <person name="Nakagawa S."/>
            <person name="Senoh A."/>
            <person name="Mizoguchi H."/>
            <person name="Goto Y."/>
            <person name="Shimizu F."/>
            <person name="Wakebe H."/>
            <person name="Hishigaki H."/>
            <person name="Watanabe T."/>
            <person name="Sugiyama A."/>
            <person name="Takemoto M."/>
            <person name="Kawakami B."/>
            <person name="Yamazaki M."/>
            <person name="Watanabe K."/>
            <person name="Kumagai A."/>
            <person name="Itakura S."/>
            <person name="Fukuzumi Y."/>
            <person name="Fujimori Y."/>
            <person name="Komiyama M."/>
            <person name="Tashiro H."/>
            <person name="Tanigami A."/>
            <person name="Fujiwara T."/>
            <person name="Ono T."/>
            <person name="Yamada K."/>
            <person name="Fujii Y."/>
            <person name="Ozaki K."/>
            <person name="Hirao M."/>
            <person name="Ohmori Y."/>
            <person name="Kawabata A."/>
            <person name="Hikiji T."/>
            <person name="Kobatake N."/>
            <person name="Inagaki H."/>
            <person name="Ikema Y."/>
            <person name="Okamoto S."/>
            <person name="Okitani R."/>
            <person name="Kawakami T."/>
            <person name="Noguchi S."/>
            <person name="Itoh T."/>
            <person name="Shigeta K."/>
            <person name="Senba T."/>
            <person name="Matsumura K."/>
            <person name="Nakajima Y."/>
            <person name="Mizuno T."/>
            <person name="Morinaga M."/>
            <person name="Sasaki M."/>
            <person name="Togashi T."/>
            <person name="Oyama M."/>
            <person name="Hata H."/>
            <person name="Watanabe M."/>
            <person name="Komatsu T."/>
            <person name="Mizushima-Sugano J."/>
            <person name="Satoh T."/>
            <person name="Shirai Y."/>
            <person name="Takahashi Y."/>
            <person name="Nakagawa K."/>
            <person name="Okumura K."/>
            <person name="Nagase T."/>
            <person name="Nomura N."/>
            <person name="Kikuchi H."/>
            <person name="Masuho Y."/>
            <person name="Yamashita R."/>
            <person name="Nakai K."/>
            <person name="Yada T."/>
            <person name="Nakamura Y."/>
            <person name="Ohara O."/>
            <person name="Isogai T."/>
            <person name="Sugano S."/>
        </authorList>
    </citation>
    <scope>NUCLEOTIDE SEQUENCE [LARGE SCALE MRNA] (ISOFORM 1)</scope>
    <source>
        <tissue>Hepatoma</tissue>
        <tissue>Teratocarcinoma</tissue>
    </source>
</reference>
<reference key="4">
    <citation type="journal article" date="2004" name="Genome Res.">
        <title>The status, quality, and expansion of the NIH full-length cDNA project: the Mammalian Gene Collection (MGC).</title>
        <authorList>
            <consortium name="The MGC Project Team"/>
        </authorList>
    </citation>
    <scope>NUCLEOTIDE SEQUENCE [LARGE SCALE MRNA] (ISOFORM 2)</scope>
    <source>
        <tissue>Skin</tissue>
    </source>
</reference>
<reference key="5">
    <citation type="submission" date="1998-09" db="EMBL/GenBank/DDBJ databases">
        <title>HIV-1 infection induced gene expression.</title>
        <authorList>
            <person name="Li F."/>
        </authorList>
    </citation>
    <scope>NUCLEOTIDE SEQUENCE [MRNA] OF 204-332 (ISOFORM 1)</scope>
</reference>
<reference key="6">
    <citation type="journal article" date="2011" name="PLoS Biol.">
        <title>The fifth adaptor protein complex.</title>
        <authorList>
            <person name="Hirst J."/>
            <person name="Barlow L.D."/>
            <person name="Francisco G.C."/>
            <person name="Sahlender D.A."/>
            <person name="Seaman M.N."/>
            <person name="Dacks J.B."/>
            <person name="Robinson M.S."/>
        </authorList>
    </citation>
    <scope>FUNCTION IN ENDOSOME TRANSPORT</scope>
    <scope>IDENTIFICATION AS PART OF AP-5</scope>
    <scope>SUBCELLULAR LOCATION</scope>
    <scope>INTERACTION WITH AP5B1 AND AP5S1</scope>
</reference>
<organism>
    <name type="scientific">Homo sapiens</name>
    <name type="common">Human</name>
    <dbReference type="NCBI Taxonomy" id="9606"/>
    <lineage>
        <taxon>Eukaryota</taxon>
        <taxon>Metazoa</taxon>
        <taxon>Chordata</taxon>
        <taxon>Craniata</taxon>
        <taxon>Vertebrata</taxon>
        <taxon>Euteleostomi</taxon>
        <taxon>Mammalia</taxon>
        <taxon>Eutheria</taxon>
        <taxon>Euarchontoglires</taxon>
        <taxon>Primates</taxon>
        <taxon>Haplorrhini</taxon>
        <taxon>Catarrhini</taxon>
        <taxon>Hominidae</taxon>
        <taxon>Homo</taxon>
    </lineage>
</organism>
<feature type="chain" id="PRO_0000193795" description="AP-5 complex subunit mu-1">
    <location>
        <begin position="1"/>
        <end position="490"/>
    </location>
</feature>
<feature type="domain" description="MHD" evidence="1">
    <location>
        <begin position="206"/>
        <end position="476"/>
    </location>
</feature>
<feature type="splice variant" id="VSP_008407" description="In isoform 2." evidence="4">
    <original>CDLEGIMPNVTISLSLPTNGSPLQDILVHPCVTSLDSAILTSSS</original>
    <variation>VRFFSGTCFIVLFNIWRKVKFASCILNNIFYFHLKQQFLNGRVM</variation>
    <location>
        <begin position="241"/>
        <end position="284"/>
    </location>
</feature>
<feature type="splice variant" id="VSP_008408" description="In isoform 2." evidence="4">
    <location>
        <begin position="285"/>
        <end position="490"/>
    </location>
</feature>
<feature type="sequence variant" id="VAR_055484" description="In dbSNP:rs10137359.">
    <original>G</original>
    <variation>R</variation>
    <location>
        <position position="226"/>
    </location>
</feature>
<feature type="sequence variant" id="VAR_055485" description="In dbSNP:rs10140245.">
    <original>E</original>
    <variation>D</variation>
    <location>
        <position position="379"/>
    </location>
</feature>
<feature type="sequence conflict" description="In Ref. 3; CAB66620." evidence="5" ref="3">
    <original>V</original>
    <variation>A</variation>
    <location>
        <position position="319"/>
    </location>
</feature>